<name>GRPE_BACTN</name>
<comment type="function">
    <text evidence="1">Participates actively in the response to hyperosmotic and heat shock by preventing the aggregation of stress-denatured proteins, in association with DnaK and GrpE. It is the nucleotide exchange factor for DnaK and may function as a thermosensor. Unfolded proteins bind initially to DnaJ; upon interaction with the DnaJ-bound protein, DnaK hydrolyzes its bound ATP, resulting in the formation of a stable complex. GrpE releases ADP from DnaK; ATP binding to DnaK triggers the release of the substrate protein, thus completing the reaction cycle. Several rounds of ATP-dependent interactions between DnaJ, DnaK and GrpE are required for fully efficient folding.</text>
</comment>
<comment type="subunit">
    <text evidence="1">Homodimer.</text>
</comment>
<comment type="subcellular location">
    <subcellularLocation>
        <location evidence="1">Cytoplasm</location>
    </subcellularLocation>
</comment>
<comment type="similarity">
    <text evidence="1">Belongs to the GrpE family.</text>
</comment>
<proteinExistence type="inferred from homology"/>
<gene>
    <name evidence="1" type="primary">grpE</name>
    <name type="ordered locus">BT_1243</name>
</gene>
<protein>
    <recommendedName>
        <fullName evidence="1">Protein GrpE</fullName>
    </recommendedName>
    <alternativeName>
        <fullName evidence="1">HSP-70 cofactor</fullName>
    </alternativeName>
</protein>
<feature type="chain" id="PRO_0000113743" description="Protein GrpE">
    <location>
        <begin position="1"/>
        <end position="193"/>
    </location>
</feature>
<feature type="region of interest" description="Disordered" evidence="2">
    <location>
        <begin position="1"/>
        <end position="45"/>
    </location>
</feature>
<feature type="compositionally biased region" description="Basic and acidic residues" evidence="2">
    <location>
        <begin position="1"/>
        <end position="22"/>
    </location>
</feature>
<feature type="compositionally biased region" description="Acidic residues" evidence="2">
    <location>
        <begin position="23"/>
        <end position="32"/>
    </location>
</feature>
<organism>
    <name type="scientific">Bacteroides thetaiotaomicron (strain ATCC 29148 / DSM 2079 / JCM 5827 / CCUG 10774 / NCTC 10582 / VPI-5482 / E50)</name>
    <dbReference type="NCBI Taxonomy" id="226186"/>
    <lineage>
        <taxon>Bacteria</taxon>
        <taxon>Pseudomonadati</taxon>
        <taxon>Bacteroidota</taxon>
        <taxon>Bacteroidia</taxon>
        <taxon>Bacteroidales</taxon>
        <taxon>Bacteroidaceae</taxon>
        <taxon>Bacteroides</taxon>
    </lineage>
</organism>
<accession>Q8A8C4</accession>
<sequence>MDPKEKEKMAEELNVEETKDTAEEQPQDDQAEEAAPLTHEEQLEKELEDAQAVIEEQKDKYLRLSAEFDNYRKRTMKEKAELILNGGEKSISSILPVIDDFERAIKTMETAKDVKAVKEGVELIYNKFMAVMAQNGVKVIETKDQPLDTDYHEAIAVIPAPSEEQKGKILDCVQTGYTLNDKVIRHAKVVVGE</sequence>
<dbReference type="EMBL" id="AE015928">
    <property type="protein sequence ID" value="AAO76350.1"/>
    <property type="molecule type" value="Genomic_DNA"/>
</dbReference>
<dbReference type="RefSeq" id="NP_810156.1">
    <property type="nucleotide sequence ID" value="NC_004663.1"/>
</dbReference>
<dbReference type="RefSeq" id="WP_011107672.1">
    <property type="nucleotide sequence ID" value="NC_004663.1"/>
</dbReference>
<dbReference type="SMR" id="Q8A8C4"/>
<dbReference type="FunCoup" id="Q8A8C4">
    <property type="interactions" value="466"/>
</dbReference>
<dbReference type="STRING" id="226186.BT_1243"/>
<dbReference type="PaxDb" id="226186-BT_1243"/>
<dbReference type="EnsemblBacteria" id="AAO76350">
    <property type="protein sequence ID" value="AAO76350"/>
    <property type="gene ID" value="BT_1243"/>
</dbReference>
<dbReference type="GeneID" id="60927221"/>
<dbReference type="KEGG" id="bth:BT_1243"/>
<dbReference type="PATRIC" id="fig|226186.12.peg.1269"/>
<dbReference type="eggNOG" id="COG0576">
    <property type="taxonomic scope" value="Bacteria"/>
</dbReference>
<dbReference type="HOGENOM" id="CLU_057217_5_2_10"/>
<dbReference type="InParanoid" id="Q8A8C4"/>
<dbReference type="OrthoDB" id="9812586at2"/>
<dbReference type="Proteomes" id="UP000001414">
    <property type="component" value="Chromosome"/>
</dbReference>
<dbReference type="GO" id="GO:0005737">
    <property type="term" value="C:cytoplasm"/>
    <property type="evidence" value="ECO:0007669"/>
    <property type="project" value="UniProtKB-SubCell"/>
</dbReference>
<dbReference type="GO" id="GO:0000774">
    <property type="term" value="F:adenyl-nucleotide exchange factor activity"/>
    <property type="evidence" value="ECO:0000318"/>
    <property type="project" value="GO_Central"/>
</dbReference>
<dbReference type="GO" id="GO:0042803">
    <property type="term" value="F:protein homodimerization activity"/>
    <property type="evidence" value="ECO:0007669"/>
    <property type="project" value="InterPro"/>
</dbReference>
<dbReference type="GO" id="GO:0051087">
    <property type="term" value="F:protein-folding chaperone binding"/>
    <property type="evidence" value="ECO:0007669"/>
    <property type="project" value="InterPro"/>
</dbReference>
<dbReference type="GO" id="GO:0051082">
    <property type="term" value="F:unfolded protein binding"/>
    <property type="evidence" value="ECO:0000318"/>
    <property type="project" value="GO_Central"/>
</dbReference>
<dbReference type="GO" id="GO:0006457">
    <property type="term" value="P:protein folding"/>
    <property type="evidence" value="ECO:0007669"/>
    <property type="project" value="InterPro"/>
</dbReference>
<dbReference type="CDD" id="cd00446">
    <property type="entry name" value="GrpE"/>
    <property type="match status" value="1"/>
</dbReference>
<dbReference type="FunFam" id="2.30.22.10:FF:000005">
    <property type="entry name" value="Co-chaperone GrpE"/>
    <property type="match status" value="1"/>
</dbReference>
<dbReference type="FunFam" id="3.90.20.20:FF:000019">
    <property type="entry name" value="Protein GrpE"/>
    <property type="match status" value="1"/>
</dbReference>
<dbReference type="Gene3D" id="3.90.20.20">
    <property type="match status" value="1"/>
</dbReference>
<dbReference type="Gene3D" id="2.30.22.10">
    <property type="entry name" value="Head domain of nucleotide exchange factor GrpE"/>
    <property type="match status" value="1"/>
</dbReference>
<dbReference type="HAMAP" id="MF_01151">
    <property type="entry name" value="GrpE"/>
    <property type="match status" value="1"/>
</dbReference>
<dbReference type="InterPro" id="IPR000740">
    <property type="entry name" value="GrpE"/>
</dbReference>
<dbReference type="InterPro" id="IPR013805">
    <property type="entry name" value="GrpE_coiled_coil"/>
</dbReference>
<dbReference type="InterPro" id="IPR009012">
    <property type="entry name" value="GrpE_head"/>
</dbReference>
<dbReference type="PANTHER" id="PTHR21237">
    <property type="entry name" value="GRPE PROTEIN"/>
    <property type="match status" value="1"/>
</dbReference>
<dbReference type="PANTHER" id="PTHR21237:SF23">
    <property type="entry name" value="GRPE PROTEIN HOMOLOG, MITOCHONDRIAL"/>
    <property type="match status" value="1"/>
</dbReference>
<dbReference type="Pfam" id="PF01025">
    <property type="entry name" value="GrpE"/>
    <property type="match status" value="1"/>
</dbReference>
<dbReference type="PRINTS" id="PR00773">
    <property type="entry name" value="GRPEPROTEIN"/>
</dbReference>
<dbReference type="SUPFAM" id="SSF58014">
    <property type="entry name" value="Coiled-coil domain of nucleotide exchange factor GrpE"/>
    <property type="match status" value="1"/>
</dbReference>
<dbReference type="SUPFAM" id="SSF51064">
    <property type="entry name" value="Head domain of nucleotide exchange factor GrpE"/>
    <property type="match status" value="1"/>
</dbReference>
<keyword id="KW-0143">Chaperone</keyword>
<keyword id="KW-0963">Cytoplasm</keyword>
<keyword id="KW-1185">Reference proteome</keyword>
<keyword id="KW-0346">Stress response</keyword>
<reference key="1">
    <citation type="journal article" date="2003" name="Science">
        <title>A genomic view of the human-Bacteroides thetaiotaomicron symbiosis.</title>
        <authorList>
            <person name="Xu J."/>
            <person name="Bjursell M.K."/>
            <person name="Himrod J."/>
            <person name="Deng S."/>
            <person name="Carmichael L.K."/>
            <person name="Chiang H.C."/>
            <person name="Hooper L.V."/>
            <person name="Gordon J.I."/>
        </authorList>
    </citation>
    <scope>NUCLEOTIDE SEQUENCE [LARGE SCALE GENOMIC DNA]</scope>
    <source>
        <strain>ATCC 29148 / DSM 2079 / JCM 5827 / CCUG 10774 / NCTC 10582 / VPI-5482 / E50</strain>
    </source>
</reference>
<evidence type="ECO:0000255" key="1">
    <source>
        <dbReference type="HAMAP-Rule" id="MF_01151"/>
    </source>
</evidence>
<evidence type="ECO:0000256" key="2">
    <source>
        <dbReference type="SAM" id="MobiDB-lite"/>
    </source>
</evidence>